<feature type="chain" id="PRO_0000111486" description="Small ribosomal subunit protein uS9">
    <location>
        <begin position="1"/>
        <end position="148"/>
    </location>
</feature>
<dbReference type="EMBL" id="AE013599">
    <property type="protein sequence ID" value="AAF46862.1"/>
    <property type="molecule type" value="Genomic_DNA"/>
</dbReference>
<dbReference type="EMBL" id="AY070671">
    <property type="protein sequence ID" value="AAL48142.1"/>
    <property type="molecule type" value="mRNA"/>
</dbReference>
<dbReference type="RefSeq" id="NP_001286731.1">
    <property type="nucleotide sequence ID" value="NM_001299802.1"/>
</dbReference>
<dbReference type="RefSeq" id="NP_611685.1">
    <property type="nucleotide sequence ID" value="NM_137841.4"/>
</dbReference>
<dbReference type="PDB" id="4V6W">
    <property type="method" value="EM"/>
    <property type="resolution" value="6.00 A"/>
    <property type="chains" value="AQ=1-148"/>
</dbReference>
<dbReference type="PDB" id="6XU6">
    <property type="method" value="EM"/>
    <property type="resolution" value="3.50 A"/>
    <property type="chains" value="AQ=1-148"/>
</dbReference>
<dbReference type="PDB" id="6XU7">
    <property type="method" value="EM"/>
    <property type="resolution" value="4.90 A"/>
    <property type="chains" value="AQ=1-148"/>
</dbReference>
<dbReference type="PDB" id="6XU8">
    <property type="method" value="EM"/>
    <property type="resolution" value="3.00 A"/>
    <property type="chains" value="AQ=1-148"/>
</dbReference>
<dbReference type="PDBsum" id="4V6W"/>
<dbReference type="PDBsum" id="6XU6"/>
<dbReference type="PDBsum" id="6XU7"/>
<dbReference type="PDBsum" id="6XU8"/>
<dbReference type="EMDB" id="EMD-10622"/>
<dbReference type="EMDB" id="EMD-10623"/>
<dbReference type="EMDB" id="EMD-10624"/>
<dbReference type="SMR" id="Q9W237"/>
<dbReference type="BioGRID" id="63196">
    <property type="interactions" value="119"/>
</dbReference>
<dbReference type="FunCoup" id="Q9W237">
    <property type="interactions" value="865"/>
</dbReference>
<dbReference type="IntAct" id="Q9W237">
    <property type="interactions" value="13"/>
</dbReference>
<dbReference type="STRING" id="7227.FBpp0309759"/>
<dbReference type="PaxDb" id="7227-FBpp0071766"/>
<dbReference type="DNASU" id="37580"/>
<dbReference type="EnsemblMetazoa" id="FBtr0071855">
    <property type="protein sequence ID" value="FBpp0071766"/>
    <property type="gene ID" value="FBgn0034743"/>
</dbReference>
<dbReference type="EnsemblMetazoa" id="FBtr0343002">
    <property type="protein sequence ID" value="FBpp0309759"/>
    <property type="gene ID" value="FBgn0034743"/>
</dbReference>
<dbReference type="GeneID" id="37580"/>
<dbReference type="KEGG" id="dme:Dmel_CG4046"/>
<dbReference type="AGR" id="FB:FBgn0034743"/>
<dbReference type="CTD" id="6217"/>
<dbReference type="FlyBase" id="FBgn0034743">
    <property type="gene designation" value="RpS16"/>
</dbReference>
<dbReference type="VEuPathDB" id="VectorBase:FBgn0034743"/>
<dbReference type="eggNOG" id="KOG1753">
    <property type="taxonomic scope" value="Eukaryota"/>
</dbReference>
<dbReference type="GeneTree" id="ENSGT00390000013067"/>
<dbReference type="HOGENOM" id="CLU_046483_4_0_1"/>
<dbReference type="InParanoid" id="Q9W237"/>
<dbReference type="OMA" id="WPIEMAR"/>
<dbReference type="OrthoDB" id="426865at2759"/>
<dbReference type="PhylomeDB" id="Q9W237"/>
<dbReference type="Reactome" id="R-DME-156827">
    <property type="pathway name" value="L13a-mediated translational silencing of Ceruloplasmin expression"/>
</dbReference>
<dbReference type="Reactome" id="R-DME-1799339">
    <property type="pathway name" value="SRP-dependent cotranslational protein targeting to membrane"/>
</dbReference>
<dbReference type="Reactome" id="R-DME-72649">
    <property type="pathway name" value="Translation initiation complex formation"/>
</dbReference>
<dbReference type="Reactome" id="R-DME-72689">
    <property type="pathway name" value="Formation of a pool of free 40S subunits"/>
</dbReference>
<dbReference type="Reactome" id="R-DME-72695">
    <property type="pathway name" value="Formation of the ternary complex, and subsequently, the 43S complex"/>
</dbReference>
<dbReference type="Reactome" id="R-DME-72702">
    <property type="pathway name" value="Ribosomal scanning and start codon recognition"/>
</dbReference>
<dbReference type="Reactome" id="R-DME-72706">
    <property type="pathway name" value="GTP hydrolysis and joining of the 60S ribosomal subunit"/>
</dbReference>
<dbReference type="Reactome" id="R-DME-975956">
    <property type="pathway name" value="Nonsense Mediated Decay (NMD) independent of the Exon Junction Complex (EJC)"/>
</dbReference>
<dbReference type="Reactome" id="R-DME-975957">
    <property type="pathway name" value="Nonsense Mediated Decay (NMD) enhanced by the Exon Junction Complex (EJC)"/>
</dbReference>
<dbReference type="SignaLink" id="Q9W237"/>
<dbReference type="BioGRID-ORCS" id="37580">
    <property type="hits" value="1 hit in 1 CRISPR screen"/>
</dbReference>
<dbReference type="ChiTaRS" id="RpS16">
    <property type="organism name" value="fly"/>
</dbReference>
<dbReference type="GenomeRNAi" id="37580"/>
<dbReference type="PRO" id="PR:Q9W237"/>
<dbReference type="Proteomes" id="UP000000803">
    <property type="component" value="Chromosome 2R"/>
</dbReference>
<dbReference type="Bgee" id="FBgn0034743">
    <property type="expression patterns" value="Expressed in ovarian sheath cell (Drosophila) in ovary and 276 other cell types or tissues"/>
</dbReference>
<dbReference type="ExpressionAtlas" id="Q9W237">
    <property type="expression patterns" value="baseline and differential"/>
</dbReference>
<dbReference type="GO" id="GO:0022626">
    <property type="term" value="C:cytosolic ribosome"/>
    <property type="evidence" value="ECO:0000314"/>
    <property type="project" value="FlyBase"/>
</dbReference>
<dbReference type="GO" id="GO:0022627">
    <property type="term" value="C:cytosolic small ribosomal subunit"/>
    <property type="evidence" value="ECO:0000318"/>
    <property type="project" value="GO_Central"/>
</dbReference>
<dbReference type="GO" id="GO:0003723">
    <property type="term" value="F:RNA binding"/>
    <property type="evidence" value="ECO:0000318"/>
    <property type="project" value="GO_Central"/>
</dbReference>
<dbReference type="GO" id="GO:0003735">
    <property type="term" value="F:structural constituent of ribosome"/>
    <property type="evidence" value="ECO:0000314"/>
    <property type="project" value="FlyBase"/>
</dbReference>
<dbReference type="GO" id="GO:0002181">
    <property type="term" value="P:cytoplasmic translation"/>
    <property type="evidence" value="ECO:0000304"/>
    <property type="project" value="FlyBase"/>
</dbReference>
<dbReference type="GO" id="GO:0000462">
    <property type="term" value="P:maturation of SSU-rRNA from tricistronic rRNA transcript (SSU-rRNA, 5.8S rRNA, LSU-rRNA)"/>
    <property type="evidence" value="ECO:0000318"/>
    <property type="project" value="GO_Central"/>
</dbReference>
<dbReference type="FunFam" id="3.30.230.10:FF:000184">
    <property type="entry name" value="40S ribosomal protein S16"/>
    <property type="match status" value="1"/>
</dbReference>
<dbReference type="Gene3D" id="3.30.230.10">
    <property type="match status" value="1"/>
</dbReference>
<dbReference type="InterPro" id="IPR020568">
    <property type="entry name" value="Ribosomal_Su5_D2-typ_SF"/>
</dbReference>
<dbReference type="InterPro" id="IPR000754">
    <property type="entry name" value="Ribosomal_uS9"/>
</dbReference>
<dbReference type="InterPro" id="IPR020574">
    <property type="entry name" value="Ribosomal_uS9_CS"/>
</dbReference>
<dbReference type="InterPro" id="IPR014721">
    <property type="entry name" value="Ribsml_uS5_D2-typ_fold_subgr"/>
</dbReference>
<dbReference type="NCBIfam" id="NF001749">
    <property type="entry name" value="PRK00474.1"/>
    <property type="match status" value="1"/>
</dbReference>
<dbReference type="PANTHER" id="PTHR21569:SF16">
    <property type="entry name" value="RIBOSOMAL PROTEIN S16"/>
    <property type="match status" value="1"/>
</dbReference>
<dbReference type="PANTHER" id="PTHR21569">
    <property type="entry name" value="RIBOSOMAL PROTEIN S9"/>
    <property type="match status" value="1"/>
</dbReference>
<dbReference type="Pfam" id="PF00380">
    <property type="entry name" value="Ribosomal_S9"/>
    <property type="match status" value="1"/>
</dbReference>
<dbReference type="SUPFAM" id="SSF54211">
    <property type="entry name" value="Ribosomal protein S5 domain 2-like"/>
    <property type="match status" value="1"/>
</dbReference>
<dbReference type="PROSITE" id="PS00360">
    <property type="entry name" value="RIBOSOMAL_S9"/>
    <property type="match status" value="1"/>
</dbReference>
<name>RS16_DROME</name>
<evidence type="ECO:0000305" key="1"/>
<protein>
    <recommendedName>
        <fullName evidence="1">Small ribosomal subunit protein uS9</fullName>
    </recommendedName>
    <alternativeName>
        <fullName>40S ribosomal protein S16</fullName>
    </alternativeName>
</protein>
<organism>
    <name type="scientific">Drosophila melanogaster</name>
    <name type="common">Fruit fly</name>
    <dbReference type="NCBI Taxonomy" id="7227"/>
    <lineage>
        <taxon>Eukaryota</taxon>
        <taxon>Metazoa</taxon>
        <taxon>Ecdysozoa</taxon>
        <taxon>Arthropoda</taxon>
        <taxon>Hexapoda</taxon>
        <taxon>Insecta</taxon>
        <taxon>Pterygota</taxon>
        <taxon>Neoptera</taxon>
        <taxon>Endopterygota</taxon>
        <taxon>Diptera</taxon>
        <taxon>Brachycera</taxon>
        <taxon>Muscomorpha</taxon>
        <taxon>Ephydroidea</taxon>
        <taxon>Drosophilidae</taxon>
        <taxon>Drosophila</taxon>
        <taxon>Sophophora</taxon>
    </lineage>
</organism>
<reference key="1">
    <citation type="journal article" date="2000" name="Science">
        <title>The genome sequence of Drosophila melanogaster.</title>
        <authorList>
            <person name="Adams M.D."/>
            <person name="Celniker S.E."/>
            <person name="Holt R.A."/>
            <person name="Evans C.A."/>
            <person name="Gocayne J.D."/>
            <person name="Amanatides P.G."/>
            <person name="Scherer S.E."/>
            <person name="Li P.W."/>
            <person name="Hoskins R.A."/>
            <person name="Galle R.F."/>
            <person name="George R.A."/>
            <person name="Lewis S.E."/>
            <person name="Richards S."/>
            <person name="Ashburner M."/>
            <person name="Henderson S.N."/>
            <person name="Sutton G.G."/>
            <person name="Wortman J.R."/>
            <person name="Yandell M.D."/>
            <person name="Zhang Q."/>
            <person name="Chen L.X."/>
            <person name="Brandon R.C."/>
            <person name="Rogers Y.-H.C."/>
            <person name="Blazej R.G."/>
            <person name="Champe M."/>
            <person name="Pfeiffer B.D."/>
            <person name="Wan K.H."/>
            <person name="Doyle C."/>
            <person name="Baxter E.G."/>
            <person name="Helt G."/>
            <person name="Nelson C.R."/>
            <person name="Miklos G.L.G."/>
            <person name="Abril J.F."/>
            <person name="Agbayani A."/>
            <person name="An H.-J."/>
            <person name="Andrews-Pfannkoch C."/>
            <person name="Baldwin D."/>
            <person name="Ballew R.M."/>
            <person name="Basu A."/>
            <person name="Baxendale J."/>
            <person name="Bayraktaroglu L."/>
            <person name="Beasley E.M."/>
            <person name="Beeson K.Y."/>
            <person name="Benos P.V."/>
            <person name="Berman B.P."/>
            <person name="Bhandari D."/>
            <person name="Bolshakov S."/>
            <person name="Borkova D."/>
            <person name="Botchan M.R."/>
            <person name="Bouck J."/>
            <person name="Brokstein P."/>
            <person name="Brottier P."/>
            <person name="Burtis K.C."/>
            <person name="Busam D.A."/>
            <person name="Butler H."/>
            <person name="Cadieu E."/>
            <person name="Center A."/>
            <person name="Chandra I."/>
            <person name="Cherry J.M."/>
            <person name="Cawley S."/>
            <person name="Dahlke C."/>
            <person name="Davenport L.B."/>
            <person name="Davies P."/>
            <person name="de Pablos B."/>
            <person name="Delcher A."/>
            <person name="Deng Z."/>
            <person name="Mays A.D."/>
            <person name="Dew I."/>
            <person name="Dietz S.M."/>
            <person name="Dodson K."/>
            <person name="Doup L.E."/>
            <person name="Downes M."/>
            <person name="Dugan-Rocha S."/>
            <person name="Dunkov B.C."/>
            <person name="Dunn P."/>
            <person name="Durbin K.J."/>
            <person name="Evangelista C.C."/>
            <person name="Ferraz C."/>
            <person name="Ferriera S."/>
            <person name="Fleischmann W."/>
            <person name="Fosler C."/>
            <person name="Gabrielian A.E."/>
            <person name="Garg N.S."/>
            <person name="Gelbart W.M."/>
            <person name="Glasser K."/>
            <person name="Glodek A."/>
            <person name="Gong F."/>
            <person name="Gorrell J.H."/>
            <person name="Gu Z."/>
            <person name="Guan P."/>
            <person name="Harris M."/>
            <person name="Harris N.L."/>
            <person name="Harvey D.A."/>
            <person name="Heiman T.J."/>
            <person name="Hernandez J.R."/>
            <person name="Houck J."/>
            <person name="Hostin D."/>
            <person name="Houston K.A."/>
            <person name="Howland T.J."/>
            <person name="Wei M.-H."/>
            <person name="Ibegwam C."/>
            <person name="Jalali M."/>
            <person name="Kalush F."/>
            <person name="Karpen G.H."/>
            <person name="Ke Z."/>
            <person name="Kennison J.A."/>
            <person name="Ketchum K.A."/>
            <person name="Kimmel B.E."/>
            <person name="Kodira C.D."/>
            <person name="Kraft C.L."/>
            <person name="Kravitz S."/>
            <person name="Kulp D."/>
            <person name="Lai Z."/>
            <person name="Lasko P."/>
            <person name="Lei Y."/>
            <person name="Levitsky A.A."/>
            <person name="Li J.H."/>
            <person name="Li Z."/>
            <person name="Liang Y."/>
            <person name="Lin X."/>
            <person name="Liu X."/>
            <person name="Mattei B."/>
            <person name="McIntosh T.C."/>
            <person name="McLeod M.P."/>
            <person name="McPherson D."/>
            <person name="Merkulov G."/>
            <person name="Milshina N.V."/>
            <person name="Mobarry C."/>
            <person name="Morris J."/>
            <person name="Moshrefi A."/>
            <person name="Mount S.M."/>
            <person name="Moy M."/>
            <person name="Murphy B."/>
            <person name="Murphy L."/>
            <person name="Muzny D.M."/>
            <person name="Nelson D.L."/>
            <person name="Nelson D.R."/>
            <person name="Nelson K.A."/>
            <person name="Nixon K."/>
            <person name="Nusskern D.R."/>
            <person name="Pacleb J.M."/>
            <person name="Palazzolo M."/>
            <person name="Pittman G.S."/>
            <person name="Pan S."/>
            <person name="Pollard J."/>
            <person name="Puri V."/>
            <person name="Reese M.G."/>
            <person name="Reinert K."/>
            <person name="Remington K."/>
            <person name="Saunders R.D.C."/>
            <person name="Scheeler F."/>
            <person name="Shen H."/>
            <person name="Shue B.C."/>
            <person name="Siden-Kiamos I."/>
            <person name="Simpson M."/>
            <person name="Skupski M.P."/>
            <person name="Smith T.J."/>
            <person name="Spier E."/>
            <person name="Spradling A.C."/>
            <person name="Stapleton M."/>
            <person name="Strong R."/>
            <person name="Sun E."/>
            <person name="Svirskas R."/>
            <person name="Tector C."/>
            <person name="Turner R."/>
            <person name="Venter E."/>
            <person name="Wang A.H."/>
            <person name="Wang X."/>
            <person name="Wang Z.-Y."/>
            <person name="Wassarman D.A."/>
            <person name="Weinstock G.M."/>
            <person name="Weissenbach J."/>
            <person name="Williams S.M."/>
            <person name="Woodage T."/>
            <person name="Worley K.C."/>
            <person name="Wu D."/>
            <person name="Yang S."/>
            <person name="Yao Q.A."/>
            <person name="Ye J."/>
            <person name="Yeh R.-F."/>
            <person name="Zaveri J.S."/>
            <person name="Zhan M."/>
            <person name="Zhang G."/>
            <person name="Zhao Q."/>
            <person name="Zheng L."/>
            <person name="Zheng X.H."/>
            <person name="Zhong F.N."/>
            <person name="Zhong W."/>
            <person name="Zhou X."/>
            <person name="Zhu S.C."/>
            <person name="Zhu X."/>
            <person name="Smith H.O."/>
            <person name="Gibbs R.A."/>
            <person name="Myers E.W."/>
            <person name="Rubin G.M."/>
            <person name="Venter J.C."/>
        </authorList>
    </citation>
    <scope>NUCLEOTIDE SEQUENCE [LARGE SCALE GENOMIC DNA]</scope>
    <source>
        <strain>Berkeley</strain>
    </source>
</reference>
<reference key="2">
    <citation type="journal article" date="2002" name="Genome Biol.">
        <title>Annotation of the Drosophila melanogaster euchromatic genome: a systematic review.</title>
        <authorList>
            <person name="Misra S."/>
            <person name="Crosby M.A."/>
            <person name="Mungall C.J."/>
            <person name="Matthews B.B."/>
            <person name="Campbell K.S."/>
            <person name="Hradecky P."/>
            <person name="Huang Y."/>
            <person name="Kaminker J.S."/>
            <person name="Millburn G.H."/>
            <person name="Prochnik S.E."/>
            <person name="Smith C.D."/>
            <person name="Tupy J.L."/>
            <person name="Whitfield E.J."/>
            <person name="Bayraktaroglu L."/>
            <person name="Berman B.P."/>
            <person name="Bettencourt B.R."/>
            <person name="Celniker S.E."/>
            <person name="de Grey A.D.N.J."/>
            <person name="Drysdale R.A."/>
            <person name="Harris N.L."/>
            <person name="Richter J."/>
            <person name="Russo S."/>
            <person name="Schroeder A.J."/>
            <person name="Shu S.Q."/>
            <person name="Stapleton M."/>
            <person name="Yamada C."/>
            <person name="Ashburner M."/>
            <person name="Gelbart W.M."/>
            <person name="Rubin G.M."/>
            <person name="Lewis S.E."/>
        </authorList>
    </citation>
    <scope>GENOME REANNOTATION</scope>
    <source>
        <strain>Berkeley</strain>
    </source>
</reference>
<reference key="3">
    <citation type="journal article" date="2002" name="Genome Biol.">
        <title>A Drosophila full-length cDNA resource.</title>
        <authorList>
            <person name="Stapleton M."/>
            <person name="Carlson J.W."/>
            <person name="Brokstein P."/>
            <person name="Yu C."/>
            <person name="Champe M."/>
            <person name="George R.A."/>
            <person name="Guarin H."/>
            <person name="Kronmiller B."/>
            <person name="Pacleb J.M."/>
            <person name="Park S."/>
            <person name="Wan K.H."/>
            <person name="Rubin G.M."/>
            <person name="Celniker S.E."/>
        </authorList>
    </citation>
    <scope>NUCLEOTIDE SEQUENCE [LARGE SCALE MRNA]</scope>
    <source>
        <strain>Berkeley</strain>
        <tissue>Head</tissue>
    </source>
</reference>
<reference key="4">
    <citation type="journal article" date="2013" name="Nature">
        <title>Structures of the human and Drosophila 80S ribosome.</title>
        <authorList>
            <person name="Anger A.M."/>
            <person name="Armache J.P."/>
            <person name="Berninghausen O."/>
            <person name="Habeck M."/>
            <person name="Subklewe M."/>
            <person name="Wilson D.N."/>
            <person name="Beckmann R."/>
        </authorList>
    </citation>
    <scope>STRUCTURE BY ELECTRON MICROSCOPY (6.0 ANGSTROMS) OF THE 80S RIBOSOME</scope>
</reference>
<comment type="similarity">
    <text evidence="1">Belongs to the universal ribosomal protein uS9 family.</text>
</comment>
<gene>
    <name type="primary">RpS16</name>
    <name type="ORF">CG4046</name>
</gene>
<keyword id="KW-0002">3D-structure</keyword>
<keyword id="KW-1185">Reference proteome</keyword>
<keyword id="KW-0687">Ribonucleoprotein</keyword>
<keyword id="KW-0689">Ribosomal protein</keyword>
<proteinExistence type="evidence at protein level"/>
<accession>Q9W237</accession>
<sequence>MQQKRREPVQAVQVFGRKKTATAVAYCKRGNGLLKVNGRPLEQIEPKVLQYKLQEPLLLLGKEKFAGVDIRVRVSGGGHVAQIYAIRQAISKALVAFYQKYVDEASKKEIKDILVQYDRTLLVGDPRRCEPKKFGGPGARARYQKSYR</sequence>